<gene>
    <name type="primary">ribK</name>
    <name type="ordered locus">MM_1709</name>
</gene>
<dbReference type="EC" id="2.7.1.161"/>
<dbReference type="EMBL" id="AE008384">
    <property type="protein sequence ID" value="AAM31405.1"/>
    <property type="molecule type" value="Genomic_DNA"/>
</dbReference>
<dbReference type="RefSeq" id="WP_011033651.1">
    <property type="nucleotide sequence ID" value="NC_003901.1"/>
</dbReference>
<dbReference type="SMR" id="Q8PW87"/>
<dbReference type="KEGG" id="mma:MM_1709"/>
<dbReference type="PATRIC" id="fig|192952.21.peg.1983"/>
<dbReference type="eggNOG" id="arCOG01904">
    <property type="taxonomic scope" value="Archaea"/>
</dbReference>
<dbReference type="HOGENOM" id="CLU_088476_0_0_2"/>
<dbReference type="UniPathway" id="UPA00276">
    <property type="reaction ID" value="UER00929"/>
</dbReference>
<dbReference type="Proteomes" id="UP000000595">
    <property type="component" value="Chromosome"/>
</dbReference>
<dbReference type="GO" id="GO:0000287">
    <property type="term" value="F:magnesium ion binding"/>
    <property type="evidence" value="ECO:0007669"/>
    <property type="project" value="UniProtKB-UniRule"/>
</dbReference>
<dbReference type="GO" id="GO:0000166">
    <property type="term" value="F:nucleotide binding"/>
    <property type="evidence" value="ECO:0007669"/>
    <property type="project" value="UniProtKB-UniRule"/>
</dbReference>
<dbReference type="GO" id="GO:0008531">
    <property type="term" value="F:riboflavin kinase activity"/>
    <property type="evidence" value="ECO:0007669"/>
    <property type="project" value="InterPro"/>
</dbReference>
<dbReference type="GO" id="GO:0009398">
    <property type="term" value="P:FMN biosynthetic process"/>
    <property type="evidence" value="ECO:0007669"/>
    <property type="project" value="UniProtKB-UniRule"/>
</dbReference>
<dbReference type="GO" id="GO:0009231">
    <property type="term" value="P:riboflavin biosynthetic process"/>
    <property type="evidence" value="ECO:0007669"/>
    <property type="project" value="InterPro"/>
</dbReference>
<dbReference type="Gene3D" id="2.40.30.30">
    <property type="entry name" value="Riboflavin kinase-like"/>
    <property type="match status" value="1"/>
</dbReference>
<dbReference type="Gene3D" id="1.10.10.10">
    <property type="entry name" value="Winged helix-like DNA-binding domain superfamily/Winged helix DNA-binding domain"/>
    <property type="match status" value="1"/>
</dbReference>
<dbReference type="HAMAP" id="MF_01285">
    <property type="entry name" value="Riboflavin_kinase"/>
    <property type="match status" value="1"/>
</dbReference>
<dbReference type="InterPro" id="IPR039063">
    <property type="entry name" value="RibK_CTP-dep"/>
</dbReference>
<dbReference type="InterPro" id="IPR023470">
    <property type="entry name" value="Riboflavin_kinase_archaeal"/>
</dbReference>
<dbReference type="InterPro" id="IPR023602">
    <property type="entry name" value="Riboflavin_kinase_CTP-dep"/>
</dbReference>
<dbReference type="InterPro" id="IPR023465">
    <property type="entry name" value="Riboflavin_kinase_dom_sf"/>
</dbReference>
<dbReference type="InterPro" id="IPR036388">
    <property type="entry name" value="WH-like_DNA-bd_sf"/>
</dbReference>
<dbReference type="InterPro" id="IPR036390">
    <property type="entry name" value="WH_DNA-bd_sf"/>
</dbReference>
<dbReference type="NCBIfam" id="NF010762">
    <property type="entry name" value="PRK14165.1"/>
    <property type="match status" value="1"/>
</dbReference>
<dbReference type="PANTHER" id="PTHR40706">
    <property type="entry name" value="RIBOFLAVIN KINASE"/>
    <property type="match status" value="1"/>
</dbReference>
<dbReference type="PANTHER" id="PTHR40706:SF1">
    <property type="entry name" value="RIBOFLAVIN KINASE"/>
    <property type="match status" value="1"/>
</dbReference>
<dbReference type="Pfam" id="PF01982">
    <property type="entry name" value="CTP-dep_RFKase"/>
    <property type="match status" value="1"/>
</dbReference>
<dbReference type="SUPFAM" id="SSF82114">
    <property type="entry name" value="Riboflavin kinase-like"/>
    <property type="match status" value="1"/>
</dbReference>
<dbReference type="SUPFAM" id="SSF46785">
    <property type="entry name" value="Winged helix' DNA-binding domain"/>
    <property type="match status" value="1"/>
</dbReference>
<keyword id="KW-0285">Flavoprotein</keyword>
<keyword id="KW-0288">FMN</keyword>
<keyword id="KW-0418">Kinase</keyword>
<keyword id="KW-0460">Magnesium</keyword>
<keyword id="KW-0479">Metal-binding</keyword>
<keyword id="KW-0547">Nucleotide-binding</keyword>
<keyword id="KW-0808">Transferase</keyword>
<feature type="chain" id="PRO_0000322093" description="Riboflavin kinase">
    <location>
        <begin position="1"/>
        <end position="225"/>
    </location>
</feature>
<feature type="region of interest" description="Unknown">
    <location>
        <begin position="1"/>
        <end position="89"/>
    </location>
</feature>
<feature type="region of interest" description="Riboflavin kinase">
    <location>
        <begin position="90"/>
        <end position="225"/>
    </location>
</feature>
<feature type="binding site" evidence="1">
    <location>
        <begin position="99"/>
        <end position="104"/>
    </location>
    <ligand>
        <name>CDP</name>
        <dbReference type="ChEBI" id="CHEBI:58069"/>
    </ligand>
</feature>
<feature type="binding site" evidence="1">
    <location>
        <position position="128"/>
    </location>
    <ligand>
        <name>Mg(2+)</name>
        <dbReference type="ChEBI" id="CHEBI:18420"/>
    </ligand>
</feature>
<feature type="binding site" evidence="1">
    <location>
        <position position="130"/>
    </location>
    <ligand>
        <name>Mg(2+)</name>
        <dbReference type="ChEBI" id="CHEBI:18420"/>
    </ligand>
</feature>
<feature type="binding site" evidence="1">
    <location>
        <position position="185"/>
    </location>
    <ligand>
        <name>FMN</name>
        <dbReference type="ChEBI" id="CHEBI:58210"/>
    </ligand>
</feature>
<feature type="binding site" evidence="1">
    <location>
        <position position="193"/>
    </location>
    <ligand>
        <name>FMN</name>
        <dbReference type="ChEBI" id="CHEBI:58210"/>
    </ligand>
</feature>
<feature type="binding site" evidence="1">
    <location>
        <begin position="198"/>
        <end position="201"/>
    </location>
    <ligand>
        <name>CDP</name>
        <dbReference type="ChEBI" id="CHEBI:58069"/>
    </ligand>
</feature>
<sequence>MPDIEYLKKLALIGAVNKTVKVSSSEFHKHTGDSSKTAARKLKQLEKERLIERELVPGGQLIKMTEKGIEILKNEYVEYSRIFSSEPDTLELEGNVLKGLGEGQYYINIPGYRTQFEEKLHFIPFPGTLNVQLSENSSALRNRLREMPSVRIDGFNDGERTFGGGNCYPVRVEGIDAAVVVPDRTHYPSDLIEIIAPVKLRDALKLKDGDRVVTQLKKQGMEGQK</sequence>
<organism>
    <name type="scientific">Methanosarcina mazei (strain ATCC BAA-159 / DSM 3647 / Goe1 / Go1 / JCM 11833 / OCM 88)</name>
    <name type="common">Methanosarcina frisia</name>
    <dbReference type="NCBI Taxonomy" id="192952"/>
    <lineage>
        <taxon>Archaea</taxon>
        <taxon>Methanobacteriati</taxon>
        <taxon>Methanobacteriota</taxon>
        <taxon>Stenosarchaea group</taxon>
        <taxon>Methanomicrobia</taxon>
        <taxon>Methanosarcinales</taxon>
        <taxon>Methanosarcinaceae</taxon>
        <taxon>Methanosarcina</taxon>
    </lineage>
</organism>
<proteinExistence type="inferred from homology"/>
<comment type="function">
    <text evidence="1">Catalyzes the CTP-dependent phosphorylation of riboflavin (vitamin B2) to form flavin mononucleotide (FMN).</text>
</comment>
<comment type="catalytic activity">
    <reaction>
        <text>riboflavin + CTP = CDP + FMN + H(+)</text>
        <dbReference type="Rhea" id="RHEA:25021"/>
        <dbReference type="ChEBI" id="CHEBI:15378"/>
        <dbReference type="ChEBI" id="CHEBI:37563"/>
        <dbReference type="ChEBI" id="CHEBI:57986"/>
        <dbReference type="ChEBI" id="CHEBI:58069"/>
        <dbReference type="ChEBI" id="CHEBI:58210"/>
        <dbReference type="EC" id="2.7.1.161"/>
    </reaction>
</comment>
<comment type="cofactor">
    <cofactor evidence="1">
        <name>Mg(2+)</name>
        <dbReference type="ChEBI" id="CHEBI:18420"/>
    </cofactor>
    <text evidence="1">Binds 1 Mg(2+) ion per subunit.</text>
</comment>
<comment type="pathway">
    <text>Cofactor biosynthesis; FMN biosynthesis; FMN from riboflavin (CTP route): step 1/1.</text>
</comment>
<comment type="similarity">
    <text evidence="2">Belongs to the archaeal riboflavin kinase family.</text>
</comment>
<evidence type="ECO:0000250" key="1"/>
<evidence type="ECO:0000305" key="2"/>
<accession>Q8PW87</accession>
<name>RIFK_METMA</name>
<protein>
    <recommendedName>
        <fullName>Riboflavin kinase</fullName>
        <shortName>RFK</shortName>
        <ecNumber>2.7.1.161</ecNumber>
    </recommendedName>
    <alternativeName>
        <fullName>CTP-dependent riboflavin kinase</fullName>
    </alternativeName>
    <alternativeName>
        <fullName>CTP:riboflavin 5'-phosphotransferase</fullName>
    </alternativeName>
    <alternativeName>
        <fullName>Flavokinase</fullName>
    </alternativeName>
</protein>
<reference key="1">
    <citation type="journal article" date="2002" name="J. Mol. Microbiol. Biotechnol.">
        <title>The genome of Methanosarcina mazei: evidence for lateral gene transfer between Bacteria and Archaea.</title>
        <authorList>
            <person name="Deppenmeier U."/>
            <person name="Johann A."/>
            <person name="Hartsch T."/>
            <person name="Merkl R."/>
            <person name="Schmitz R.A."/>
            <person name="Martinez-Arias R."/>
            <person name="Henne A."/>
            <person name="Wiezer A."/>
            <person name="Baeumer S."/>
            <person name="Jacobi C."/>
            <person name="Brueggemann H."/>
            <person name="Lienard T."/>
            <person name="Christmann A."/>
            <person name="Boemecke M."/>
            <person name="Steckel S."/>
            <person name="Bhattacharyya A."/>
            <person name="Lykidis A."/>
            <person name="Overbeek R."/>
            <person name="Klenk H.-P."/>
            <person name="Gunsalus R.P."/>
            <person name="Fritz H.-J."/>
            <person name="Gottschalk G."/>
        </authorList>
    </citation>
    <scope>NUCLEOTIDE SEQUENCE [LARGE SCALE GENOMIC DNA]</scope>
    <source>
        <strain>ATCC BAA-159 / DSM 3647 / Goe1 / Go1 / JCM 11833 / OCM 88</strain>
    </source>
</reference>